<sequence>MPIQVLPPQLANQIAAGEVVERPASVVKELVENSLDAGATRIDIDIERGGAKLIRIRDNGCGIKKDELALALARHATSKIASLDDLEAIISLGFRGEALASISSVSRLTLTSRTAEQQEAWQAYAEGRDMNVTVKPAAHPVGTTLEVLDLFYNTPARRKFLRTEKTEFNHIDEIIRRIALARFDVTINLSHNGKIVRQYRAVPEGGQKERRLGAICGTAFLEQALAIEWQHGDLTLRGWVADPNHTTPALAEIQYCYVNGRMMRDRLINHAIRQACEDKLGADQQPAFVLYLEIDPHQVDVNVHPAKHEVRFHQSRLVHDFIYQGVLSVLQQQLETPLPLDDEPQPAPRSIPENRVAAGRNHFAEPAAREPVAPRYTPAPASGSRPAAPWPNAQPGYQKQQGEVYRQLLQTPAPMQKLKAPEPQEPALAANSQSFGRVLTIVHSDCALLERDGNISLLALPVAERWLRQVQLTPGEAPVCAQPLLIPLRLKVSGEEKSALEKAQSALAELGIDFQSDAQHVTIRAVPLPLRQQNLQILIPELIGYLAKQSVFEPGNIAQWIARNLMSEHAQWSMAQAITLLADVERLCPQLVKTPPGGLLQSVDLHPAIKALKDE</sequence>
<evidence type="ECO:0000255" key="1">
    <source>
        <dbReference type="HAMAP-Rule" id="MF_00149"/>
    </source>
</evidence>
<evidence type="ECO:0000256" key="2">
    <source>
        <dbReference type="SAM" id="MobiDB-lite"/>
    </source>
</evidence>
<organism>
    <name type="scientific">Shigella sonnei (strain Ss046)</name>
    <dbReference type="NCBI Taxonomy" id="300269"/>
    <lineage>
        <taxon>Bacteria</taxon>
        <taxon>Pseudomonadati</taxon>
        <taxon>Pseudomonadota</taxon>
        <taxon>Gammaproteobacteria</taxon>
        <taxon>Enterobacterales</taxon>
        <taxon>Enterobacteriaceae</taxon>
        <taxon>Shigella</taxon>
    </lineage>
</organism>
<reference key="1">
    <citation type="journal article" date="2005" name="Nucleic Acids Res.">
        <title>Genome dynamics and diversity of Shigella species, the etiologic agents of bacillary dysentery.</title>
        <authorList>
            <person name="Yang F."/>
            <person name="Yang J."/>
            <person name="Zhang X."/>
            <person name="Chen L."/>
            <person name="Jiang Y."/>
            <person name="Yan Y."/>
            <person name="Tang X."/>
            <person name="Wang J."/>
            <person name="Xiong Z."/>
            <person name="Dong J."/>
            <person name="Xue Y."/>
            <person name="Zhu Y."/>
            <person name="Xu X."/>
            <person name="Sun L."/>
            <person name="Chen S."/>
            <person name="Nie H."/>
            <person name="Peng J."/>
            <person name="Xu J."/>
            <person name="Wang Y."/>
            <person name="Yuan Z."/>
            <person name="Wen Y."/>
            <person name="Yao Z."/>
            <person name="Shen Y."/>
            <person name="Qiang B."/>
            <person name="Hou Y."/>
            <person name="Yu J."/>
            <person name="Jin Q."/>
        </authorList>
    </citation>
    <scope>NUCLEOTIDE SEQUENCE [LARGE SCALE GENOMIC DNA]</scope>
    <source>
        <strain>Ss046</strain>
    </source>
</reference>
<protein>
    <recommendedName>
        <fullName evidence="1">DNA mismatch repair protein MutL</fullName>
    </recommendedName>
</protein>
<gene>
    <name evidence="1" type="primary">mutL</name>
    <name type="ordered locus">SSON_4355</name>
</gene>
<keyword id="KW-0227">DNA damage</keyword>
<keyword id="KW-0234">DNA repair</keyword>
<keyword id="KW-1185">Reference proteome</keyword>
<feature type="chain" id="PRO_1000010080" description="DNA mismatch repair protein MutL">
    <location>
        <begin position="1"/>
        <end position="615"/>
    </location>
</feature>
<feature type="region of interest" description="Disordered" evidence="2">
    <location>
        <begin position="363"/>
        <end position="397"/>
    </location>
</feature>
<feature type="compositionally biased region" description="Low complexity" evidence="2">
    <location>
        <begin position="364"/>
        <end position="391"/>
    </location>
</feature>
<comment type="function">
    <text evidence="1">This protein is involved in the repair of mismatches in DNA. It is required for dam-dependent methyl-directed DNA mismatch repair. May act as a 'molecular matchmaker', a protein that promotes the formation of a stable complex between two or more DNA-binding proteins in an ATP-dependent manner without itself being part of a final effector complex.</text>
</comment>
<comment type="similarity">
    <text evidence="1">Belongs to the DNA mismatch repair MutL/HexB family.</text>
</comment>
<accession>Q3YUH3</accession>
<name>MUTL_SHISS</name>
<proteinExistence type="inferred from homology"/>
<dbReference type="EMBL" id="CP000038">
    <property type="protein sequence ID" value="AAZ90839.1"/>
    <property type="molecule type" value="Genomic_DNA"/>
</dbReference>
<dbReference type="RefSeq" id="WP_001122503.1">
    <property type="nucleotide sequence ID" value="NC_007384.1"/>
</dbReference>
<dbReference type="SMR" id="Q3YUH3"/>
<dbReference type="GeneID" id="93777651"/>
<dbReference type="KEGG" id="ssn:SSON_4355"/>
<dbReference type="HOGENOM" id="CLU_004131_5_1_6"/>
<dbReference type="Proteomes" id="UP000002529">
    <property type="component" value="Chromosome"/>
</dbReference>
<dbReference type="GO" id="GO:0032300">
    <property type="term" value="C:mismatch repair complex"/>
    <property type="evidence" value="ECO:0007669"/>
    <property type="project" value="InterPro"/>
</dbReference>
<dbReference type="GO" id="GO:0005524">
    <property type="term" value="F:ATP binding"/>
    <property type="evidence" value="ECO:0007669"/>
    <property type="project" value="InterPro"/>
</dbReference>
<dbReference type="GO" id="GO:0016887">
    <property type="term" value="F:ATP hydrolysis activity"/>
    <property type="evidence" value="ECO:0007669"/>
    <property type="project" value="InterPro"/>
</dbReference>
<dbReference type="GO" id="GO:0140664">
    <property type="term" value="F:ATP-dependent DNA damage sensor activity"/>
    <property type="evidence" value="ECO:0007669"/>
    <property type="project" value="InterPro"/>
</dbReference>
<dbReference type="GO" id="GO:0030983">
    <property type="term" value="F:mismatched DNA binding"/>
    <property type="evidence" value="ECO:0007669"/>
    <property type="project" value="InterPro"/>
</dbReference>
<dbReference type="GO" id="GO:0006298">
    <property type="term" value="P:mismatch repair"/>
    <property type="evidence" value="ECO:0007669"/>
    <property type="project" value="UniProtKB-UniRule"/>
</dbReference>
<dbReference type="CDD" id="cd16926">
    <property type="entry name" value="HATPase_MutL-MLH-PMS-like"/>
    <property type="match status" value="1"/>
</dbReference>
<dbReference type="CDD" id="cd03482">
    <property type="entry name" value="MutL_Trans_MutL"/>
    <property type="match status" value="1"/>
</dbReference>
<dbReference type="FunFam" id="3.30.230.10:FF:000013">
    <property type="entry name" value="DNA mismatch repair endonuclease MutL"/>
    <property type="match status" value="1"/>
</dbReference>
<dbReference type="FunFam" id="3.30.565.10:FF:000003">
    <property type="entry name" value="DNA mismatch repair endonuclease MutL"/>
    <property type="match status" value="1"/>
</dbReference>
<dbReference type="FunFam" id="3.30.1370.100:FF:000002">
    <property type="entry name" value="DNA mismatch repair protein MutL"/>
    <property type="match status" value="1"/>
</dbReference>
<dbReference type="Gene3D" id="3.30.230.10">
    <property type="match status" value="1"/>
</dbReference>
<dbReference type="Gene3D" id="3.30.565.10">
    <property type="entry name" value="Histidine kinase-like ATPase, C-terminal domain"/>
    <property type="match status" value="1"/>
</dbReference>
<dbReference type="Gene3D" id="3.30.1540.20">
    <property type="entry name" value="MutL, C-terminal domain, dimerisation subdomain"/>
    <property type="match status" value="1"/>
</dbReference>
<dbReference type="Gene3D" id="3.30.1370.100">
    <property type="entry name" value="MutL, C-terminal domain, regulatory subdomain"/>
    <property type="match status" value="1"/>
</dbReference>
<dbReference type="HAMAP" id="MF_00149">
    <property type="entry name" value="DNA_mis_repair"/>
    <property type="match status" value="1"/>
</dbReference>
<dbReference type="InterPro" id="IPR014762">
    <property type="entry name" value="DNA_mismatch_repair_CS"/>
</dbReference>
<dbReference type="InterPro" id="IPR020667">
    <property type="entry name" value="DNA_mismatch_repair_MutL"/>
</dbReference>
<dbReference type="InterPro" id="IPR013507">
    <property type="entry name" value="DNA_mismatch_S5_2-like"/>
</dbReference>
<dbReference type="InterPro" id="IPR036890">
    <property type="entry name" value="HATPase_C_sf"/>
</dbReference>
<dbReference type="InterPro" id="IPR002099">
    <property type="entry name" value="MutL/Mlh/PMS"/>
</dbReference>
<dbReference type="InterPro" id="IPR038973">
    <property type="entry name" value="MutL/Mlh/Pms-like"/>
</dbReference>
<dbReference type="InterPro" id="IPR014790">
    <property type="entry name" value="MutL_C"/>
</dbReference>
<dbReference type="InterPro" id="IPR042120">
    <property type="entry name" value="MutL_C_dimsub"/>
</dbReference>
<dbReference type="InterPro" id="IPR042121">
    <property type="entry name" value="MutL_C_regsub"/>
</dbReference>
<dbReference type="InterPro" id="IPR037198">
    <property type="entry name" value="MutL_C_sf"/>
</dbReference>
<dbReference type="InterPro" id="IPR020568">
    <property type="entry name" value="Ribosomal_Su5_D2-typ_SF"/>
</dbReference>
<dbReference type="InterPro" id="IPR014721">
    <property type="entry name" value="Ribsml_uS5_D2-typ_fold_subgr"/>
</dbReference>
<dbReference type="NCBIfam" id="TIGR00585">
    <property type="entry name" value="mutl"/>
    <property type="match status" value="1"/>
</dbReference>
<dbReference type="NCBIfam" id="NF000948">
    <property type="entry name" value="PRK00095.1-1"/>
    <property type="match status" value="1"/>
</dbReference>
<dbReference type="PANTHER" id="PTHR10073">
    <property type="entry name" value="DNA MISMATCH REPAIR PROTEIN MLH, PMS, MUTL"/>
    <property type="match status" value="1"/>
</dbReference>
<dbReference type="PANTHER" id="PTHR10073:SF12">
    <property type="entry name" value="DNA MISMATCH REPAIR PROTEIN MLH1"/>
    <property type="match status" value="1"/>
</dbReference>
<dbReference type="Pfam" id="PF01119">
    <property type="entry name" value="DNA_mis_repair"/>
    <property type="match status" value="1"/>
</dbReference>
<dbReference type="Pfam" id="PF13589">
    <property type="entry name" value="HATPase_c_3"/>
    <property type="match status" value="1"/>
</dbReference>
<dbReference type="Pfam" id="PF08676">
    <property type="entry name" value="MutL_C"/>
    <property type="match status" value="1"/>
</dbReference>
<dbReference type="SMART" id="SM01340">
    <property type="entry name" value="DNA_mis_repair"/>
    <property type="match status" value="1"/>
</dbReference>
<dbReference type="SMART" id="SM00853">
    <property type="entry name" value="MutL_C"/>
    <property type="match status" value="1"/>
</dbReference>
<dbReference type="SUPFAM" id="SSF55874">
    <property type="entry name" value="ATPase domain of HSP90 chaperone/DNA topoisomerase II/histidine kinase"/>
    <property type="match status" value="1"/>
</dbReference>
<dbReference type="SUPFAM" id="SSF118116">
    <property type="entry name" value="DNA mismatch repair protein MutL"/>
    <property type="match status" value="1"/>
</dbReference>
<dbReference type="SUPFAM" id="SSF54211">
    <property type="entry name" value="Ribosomal protein S5 domain 2-like"/>
    <property type="match status" value="1"/>
</dbReference>
<dbReference type="PROSITE" id="PS00058">
    <property type="entry name" value="DNA_MISMATCH_REPAIR_1"/>
    <property type="match status" value="1"/>
</dbReference>